<proteinExistence type="inferred from homology"/>
<gene>
    <name type="primary">COX1</name>
    <name type="synonym">COI</name>
    <name type="synonym">COXI</name>
    <name type="ORF">GlmaxMp19</name>
</gene>
<accession>P07506</accession>
<accession>M1FQK2</accession>
<feature type="chain" id="PRO_0000183420" description="Cytochrome c oxidase subunit 1">
    <location>
        <begin position="1"/>
        <end position="527"/>
    </location>
</feature>
<feature type="transmembrane region" description="Helical" evidence="3">
    <location>
        <begin position="18"/>
        <end position="38"/>
    </location>
</feature>
<feature type="transmembrane region" description="Helical" evidence="3">
    <location>
        <begin position="59"/>
        <end position="79"/>
    </location>
</feature>
<feature type="transmembrane region" description="Helical" evidence="3">
    <location>
        <begin position="103"/>
        <end position="123"/>
    </location>
</feature>
<feature type="transmembrane region" description="Helical" evidence="3">
    <location>
        <begin position="149"/>
        <end position="169"/>
    </location>
</feature>
<feature type="transmembrane region" description="Helical" evidence="3">
    <location>
        <begin position="193"/>
        <end position="213"/>
    </location>
</feature>
<feature type="transmembrane region" description="Helical" evidence="3">
    <location>
        <begin position="246"/>
        <end position="266"/>
    </location>
</feature>
<feature type="transmembrane region" description="Helical" evidence="3">
    <location>
        <begin position="269"/>
        <end position="289"/>
    </location>
</feature>
<feature type="transmembrane region" description="Helical" evidence="3">
    <location>
        <begin position="312"/>
        <end position="332"/>
    </location>
</feature>
<feature type="transmembrane region" description="Helical" evidence="3">
    <location>
        <begin position="340"/>
        <end position="360"/>
    </location>
</feature>
<feature type="transmembrane region" description="Helical" evidence="3">
    <location>
        <begin position="375"/>
        <end position="395"/>
    </location>
</feature>
<feature type="transmembrane region" description="Helical" evidence="3">
    <location>
        <begin position="414"/>
        <end position="434"/>
    </location>
</feature>
<feature type="transmembrane region" description="Helical" evidence="3">
    <location>
        <begin position="447"/>
        <end position="467"/>
    </location>
</feature>
<feature type="binding site" evidence="2">
    <location>
        <position position="41"/>
    </location>
    <ligand>
        <name>Ca(2+)</name>
        <dbReference type="ChEBI" id="CHEBI:29108"/>
    </ligand>
</feature>
<feature type="binding site" evidence="2">
    <location>
        <position position="46"/>
    </location>
    <ligand>
        <name>Ca(2+)</name>
        <dbReference type="ChEBI" id="CHEBI:29108"/>
    </ligand>
</feature>
<feature type="binding site" description="axial binding residue" evidence="2">
    <location>
        <position position="64"/>
    </location>
    <ligand>
        <name>Fe(II)-heme a</name>
        <dbReference type="ChEBI" id="CHEBI:61715"/>
        <note>low-spin</note>
    </ligand>
    <ligandPart>
        <name>Fe</name>
        <dbReference type="ChEBI" id="CHEBI:18248"/>
    </ligandPart>
</feature>
<feature type="binding site" evidence="2">
    <location>
        <position position="243"/>
    </location>
    <ligand>
        <name>Cu cation</name>
        <dbReference type="ChEBI" id="CHEBI:23378"/>
        <label>B</label>
    </ligand>
</feature>
<feature type="binding site" evidence="1">
    <location>
        <position position="247"/>
    </location>
    <ligand>
        <name>O2</name>
        <dbReference type="ChEBI" id="CHEBI:15379"/>
    </ligand>
</feature>
<feature type="binding site" evidence="2">
    <location>
        <position position="292"/>
    </location>
    <ligand>
        <name>Cu cation</name>
        <dbReference type="ChEBI" id="CHEBI:23378"/>
        <label>B</label>
    </ligand>
</feature>
<feature type="binding site" evidence="2">
    <location>
        <position position="293"/>
    </location>
    <ligand>
        <name>Cu cation</name>
        <dbReference type="ChEBI" id="CHEBI:23378"/>
        <label>B</label>
    </ligand>
</feature>
<feature type="binding site" evidence="2">
    <location>
        <position position="370"/>
    </location>
    <ligand>
        <name>Mg(2+)</name>
        <dbReference type="ChEBI" id="CHEBI:18420"/>
        <note>ligand shared with subunit 2</note>
    </ligand>
</feature>
<feature type="binding site" evidence="2">
    <location>
        <position position="371"/>
    </location>
    <ligand>
        <name>Mg(2+)</name>
        <dbReference type="ChEBI" id="CHEBI:18420"/>
        <note>ligand shared with subunit 2</note>
    </ligand>
</feature>
<feature type="binding site" description="axial binding residue" evidence="2">
    <location>
        <position position="378"/>
    </location>
    <ligand>
        <name>heme a3</name>
        <dbReference type="ChEBI" id="CHEBI:83282"/>
        <note>high-spin</note>
    </ligand>
    <ligandPart>
        <name>Fe</name>
        <dbReference type="ChEBI" id="CHEBI:18248"/>
    </ligandPart>
</feature>
<feature type="binding site" description="axial binding residue" evidence="2">
    <location>
        <position position="380"/>
    </location>
    <ligand>
        <name>Fe(II)-heme a</name>
        <dbReference type="ChEBI" id="CHEBI:61715"/>
        <note>low-spin</note>
    </ligand>
    <ligandPart>
        <name>Fe</name>
        <dbReference type="ChEBI" id="CHEBI:18248"/>
    </ligandPart>
</feature>
<feature type="binding site" evidence="2">
    <location>
        <position position="443"/>
    </location>
    <ligand>
        <name>Ca(2+)</name>
        <dbReference type="ChEBI" id="CHEBI:29108"/>
    </ligand>
</feature>
<feature type="cross-link" description="1'-histidyl-3'-tyrosine (His-Tyr)" evidence="2">
    <location>
        <begin position="243"/>
        <end position="247"/>
    </location>
</feature>
<feature type="sequence conflict" description="In Ref. 1; AAA70318." evidence="4" ref="1">
    <original>A</original>
    <variation>G</variation>
    <location>
        <position position="63"/>
    </location>
</feature>
<comment type="function">
    <text evidence="2">Component of the cytochrome c oxidase, the last enzyme in the mitochondrial electron transport chain which drives oxidative phosphorylation. The respiratory chain contains 3 multisubunit complexes succinate dehydrogenase (complex II, CII), ubiquinol-cytochrome c oxidoreductase (cytochrome b-c1 complex, complex III, CIII) and cytochrome c oxidase (complex IV, CIV), that cooperate to transfer electrons derived from NADH and succinate to molecular oxygen, creating an electrochemical gradient over the inner membrane that drives transmembrane transport and the ATP synthase. Cytochrome c oxidase is the component of the respiratory chain that catalyzes the reduction of oxygen to water. Electrons originating from reduced cytochrome c in the intermembrane space (IMS) are transferred via the dinuclear copper A center (CU(A)) of subunit 2 and heme A of subunit 1 to the active site in subunit 1, a binuclear center (BNC) formed by heme A3 and copper B (CU(B)). The BNC reduces molecular oxygen to 2 water molecules using 4 electrons from cytochrome c in the IMS and 4 protons from the mitochondrial matrix.</text>
</comment>
<comment type="catalytic activity">
    <reaction evidence="2">
        <text>4 Fe(II)-[cytochrome c] + O2 + 8 H(+)(in) = 4 Fe(III)-[cytochrome c] + 2 H2O + 4 H(+)(out)</text>
        <dbReference type="Rhea" id="RHEA:11436"/>
        <dbReference type="Rhea" id="RHEA-COMP:10350"/>
        <dbReference type="Rhea" id="RHEA-COMP:14399"/>
        <dbReference type="ChEBI" id="CHEBI:15377"/>
        <dbReference type="ChEBI" id="CHEBI:15378"/>
        <dbReference type="ChEBI" id="CHEBI:15379"/>
        <dbReference type="ChEBI" id="CHEBI:29033"/>
        <dbReference type="ChEBI" id="CHEBI:29034"/>
        <dbReference type="EC" id="7.1.1.9"/>
    </reaction>
    <physiologicalReaction direction="left-to-right" evidence="2">
        <dbReference type="Rhea" id="RHEA:11437"/>
    </physiologicalReaction>
</comment>
<comment type="cofactor">
    <cofactor evidence="2">
        <name>heme</name>
        <dbReference type="ChEBI" id="CHEBI:30413"/>
    </cofactor>
    <text evidence="2">Binds 2 heme A groups non-covalently per subunit.</text>
</comment>
<comment type="cofactor">
    <cofactor evidence="2">
        <name>Cu cation</name>
        <dbReference type="ChEBI" id="CHEBI:23378"/>
    </cofactor>
    <text evidence="2">Binds a copper B center.</text>
</comment>
<comment type="pathway">
    <text evidence="2">Energy metabolism; oxidative phosphorylation.</text>
</comment>
<comment type="subunit">
    <text evidence="2">Component of the cytochrome c oxidase (complex IV, CIV), a multisubunit enzyme composed of a catalytic core of 3 subunits and several supernumerary subunits. The complex exists as a monomer or a dimer and forms supercomplexes (SCs) in the inner mitochondrial membrane with ubiquinol-cytochrome c oxidoreductase (cytochrome b-c1 complex, complex III, CIII).</text>
</comment>
<comment type="subcellular location">
    <subcellularLocation>
        <location evidence="2">Mitochondrion inner membrane</location>
        <topology evidence="2">Multi-pass membrane protein</topology>
    </subcellularLocation>
</comment>
<comment type="similarity">
    <text evidence="4">Belongs to the heme-copper respiratory oxidase family.</text>
</comment>
<evidence type="ECO:0000250" key="1">
    <source>
        <dbReference type="UniProtKB" id="P00396"/>
    </source>
</evidence>
<evidence type="ECO:0000250" key="2">
    <source>
        <dbReference type="UniProtKB" id="P00401"/>
    </source>
</evidence>
<evidence type="ECO:0000255" key="3"/>
<evidence type="ECO:0000305" key="4"/>
<sequence length="527" mass="57491">MTNPVRWLFSTNHKDIGTLYFIFGAIAGVMGTCFSVLIRMELARPGDQILGGNHQLYNVLITAHAFLMIFFMVMPAMIGGSGNWSVPILIGAPDMAFPRLNNISFWLLPPSLLLLLSSALVEVGSGTGWTVYPPLSGITSHSGGAVDSAISSLHLSGVSSILGSINFITTISNMRGPGMTMHRSPLFVWSVPVTAFPLLLSLPVLAGAITMLLTDRNFNTTFSDPAGGGDPILYQHLFRFFGHPEVYIPILPGSGIISHIVSTFSGKPVFGYLGMVYAMISIGVLGFLVWAHHMFTVGLDVDTRAYFTAATMIIAVPTGIKIFSWIATMWGGSIQYKTPMLFAVGFIFLFTIGGLTGIVLANSGLDIALHDTYYVVAHFHYVLSMGAVFALFAGFHYWVGKIFGRTYPETLGQIHFWITFFGVNLTLFPMHFLGLSGMPRRIPDYPDAYAGWNALSSFGSYISVVGIRRFFVVVTITSSSGNNITRANIPWAVEQNSTTLEWLVQSPPAFHTFGELPAIKETKSYVK</sequence>
<organism>
    <name type="scientific">Glycine max</name>
    <name type="common">Soybean</name>
    <name type="synonym">Glycine hispida</name>
    <dbReference type="NCBI Taxonomy" id="3847"/>
    <lineage>
        <taxon>Eukaryota</taxon>
        <taxon>Viridiplantae</taxon>
        <taxon>Streptophyta</taxon>
        <taxon>Embryophyta</taxon>
        <taxon>Tracheophyta</taxon>
        <taxon>Spermatophyta</taxon>
        <taxon>Magnoliopsida</taxon>
        <taxon>eudicotyledons</taxon>
        <taxon>Gunneridae</taxon>
        <taxon>Pentapetalae</taxon>
        <taxon>rosids</taxon>
        <taxon>fabids</taxon>
        <taxon>Fabales</taxon>
        <taxon>Fabaceae</taxon>
        <taxon>Papilionoideae</taxon>
        <taxon>50 kb inversion clade</taxon>
        <taxon>NPAAA clade</taxon>
        <taxon>indigoferoid/millettioid clade</taxon>
        <taxon>Phaseoleae</taxon>
        <taxon>Glycine</taxon>
        <taxon>Glycine subgen. Soja</taxon>
    </lineage>
</organism>
<keyword id="KW-0106">Calcium</keyword>
<keyword id="KW-0186">Copper</keyword>
<keyword id="KW-0249">Electron transport</keyword>
<keyword id="KW-0349">Heme</keyword>
<keyword id="KW-0408">Iron</keyword>
<keyword id="KW-0460">Magnesium</keyword>
<keyword id="KW-0472">Membrane</keyword>
<keyword id="KW-0479">Metal-binding</keyword>
<keyword id="KW-0496">Mitochondrion</keyword>
<keyword id="KW-0999">Mitochondrion inner membrane</keyword>
<keyword id="KW-1185">Reference proteome</keyword>
<keyword id="KW-0679">Respiratory chain</keyword>
<keyword id="KW-1278">Translocase</keyword>
<keyword id="KW-0812">Transmembrane</keyword>
<keyword id="KW-1133">Transmembrane helix</keyword>
<keyword id="KW-0813">Transport</keyword>
<protein>
    <recommendedName>
        <fullName>Cytochrome c oxidase subunit 1</fullName>
        <ecNumber>7.1.1.9</ecNumber>
    </recommendedName>
    <alternativeName>
        <fullName>Cytochrome c oxidase polypeptide I</fullName>
    </alternativeName>
</protein>
<name>COX1_SOYBN</name>
<geneLocation type="mitochondrion"/>
<dbReference type="EC" id="7.1.1.9"/>
<dbReference type="EMBL" id="M16884">
    <property type="protein sequence ID" value="AAA70318.1"/>
    <property type="molecule type" value="Genomic_DNA"/>
</dbReference>
<dbReference type="EMBL" id="JX463295">
    <property type="protein sequence ID" value="AFR34306.1"/>
    <property type="molecule type" value="Genomic_DNA"/>
</dbReference>
<dbReference type="PIR" id="JA0001">
    <property type="entry name" value="OBSY1"/>
</dbReference>
<dbReference type="RefSeq" id="YP_007516868.1">
    <property type="nucleotide sequence ID" value="NC_020455.1"/>
</dbReference>
<dbReference type="SMR" id="P07506"/>
<dbReference type="FunCoup" id="P07506">
    <property type="interactions" value="95"/>
</dbReference>
<dbReference type="STRING" id="3847.P07506"/>
<dbReference type="PaxDb" id="3847-GLYMA03G23306.1"/>
<dbReference type="GeneID" id="15308534"/>
<dbReference type="KEGG" id="gmx:15308534"/>
<dbReference type="eggNOG" id="KOG4769">
    <property type="taxonomic scope" value="Eukaryota"/>
</dbReference>
<dbReference type="InParanoid" id="P07506"/>
<dbReference type="UniPathway" id="UPA00705"/>
<dbReference type="Proteomes" id="UP000008827">
    <property type="component" value="Mitochondrion"/>
</dbReference>
<dbReference type="GO" id="GO:0005743">
    <property type="term" value="C:mitochondrial inner membrane"/>
    <property type="evidence" value="ECO:0007669"/>
    <property type="project" value="UniProtKB-SubCell"/>
</dbReference>
<dbReference type="GO" id="GO:0045277">
    <property type="term" value="C:respiratory chain complex IV"/>
    <property type="evidence" value="ECO:0000318"/>
    <property type="project" value="GO_Central"/>
</dbReference>
<dbReference type="GO" id="GO:0004129">
    <property type="term" value="F:cytochrome-c oxidase activity"/>
    <property type="evidence" value="ECO:0007669"/>
    <property type="project" value="UniProtKB-EC"/>
</dbReference>
<dbReference type="GO" id="GO:0020037">
    <property type="term" value="F:heme binding"/>
    <property type="evidence" value="ECO:0007669"/>
    <property type="project" value="InterPro"/>
</dbReference>
<dbReference type="GO" id="GO:0046872">
    <property type="term" value="F:metal ion binding"/>
    <property type="evidence" value="ECO:0007669"/>
    <property type="project" value="UniProtKB-KW"/>
</dbReference>
<dbReference type="GO" id="GO:0009060">
    <property type="term" value="P:aerobic respiration"/>
    <property type="evidence" value="ECO:0000318"/>
    <property type="project" value="GO_Central"/>
</dbReference>
<dbReference type="GO" id="GO:0006119">
    <property type="term" value="P:oxidative phosphorylation"/>
    <property type="evidence" value="ECO:0007669"/>
    <property type="project" value="UniProtKB-UniPathway"/>
</dbReference>
<dbReference type="GO" id="GO:0022904">
    <property type="term" value="P:respiratory electron transport chain"/>
    <property type="evidence" value="ECO:0000318"/>
    <property type="project" value="GO_Central"/>
</dbReference>
<dbReference type="CDD" id="cd01663">
    <property type="entry name" value="Cyt_c_Oxidase_I"/>
    <property type="match status" value="1"/>
</dbReference>
<dbReference type="FunFam" id="1.20.210.10:FF:000001">
    <property type="entry name" value="Cytochrome c oxidase subunit 1"/>
    <property type="match status" value="1"/>
</dbReference>
<dbReference type="Gene3D" id="1.20.210.10">
    <property type="entry name" value="Cytochrome c oxidase-like, subunit I domain"/>
    <property type="match status" value="1"/>
</dbReference>
<dbReference type="InterPro" id="IPR023616">
    <property type="entry name" value="Cyt_c_oxase-like_su1_dom"/>
</dbReference>
<dbReference type="InterPro" id="IPR036927">
    <property type="entry name" value="Cyt_c_oxase-like_su1_sf"/>
</dbReference>
<dbReference type="InterPro" id="IPR000883">
    <property type="entry name" value="Cyt_C_Oxase_1"/>
</dbReference>
<dbReference type="InterPro" id="IPR033944">
    <property type="entry name" value="Cyt_c_oxase_su1_dom"/>
</dbReference>
<dbReference type="PANTHER" id="PTHR10422">
    <property type="entry name" value="CYTOCHROME C OXIDASE SUBUNIT 1"/>
    <property type="match status" value="1"/>
</dbReference>
<dbReference type="PANTHER" id="PTHR10422:SF18">
    <property type="entry name" value="CYTOCHROME C OXIDASE SUBUNIT 1"/>
    <property type="match status" value="1"/>
</dbReference>
<dbReference type="Pfam" id="PF00115">
    <property type="entry name" value="COX1"/>
    <property type="match status" value="1"/>
</dbReference>
<dbReference type="PRINTS" id="PR01165">
    <property type="entry name" value="CYCOXIDASEI"/>
</dbReference>
<dbReference type="SUPFAM" id="SSF81442">
    <property type="entry name" value="Cytochrome c oxidase subunit I-like"/>
    <property type="match status" value="1"/>
</dbReference>
<dbReference type="PROSITE" id="PS50855">
    <property type="entry name" value="COX1"/>
    <property type="match status" value="1"/>
</dbReference>
<reference key="1">
    <citation type="journal article" date="1986" name="Plant Mol. Biol.">
        <title>Nucleotide sequence of the cytochrome oxidase subunit I gene from soybean mitochondria.</title>
        <authorList>
            <person name="Grabau E.A."/>
        </authorList>
        <dbReference type="AGRICOLA" id="IND87011445"/>
    </citation>
    <scope>NUCLEOTIDE SEQUENCE [GENOMIC DNA]</scope>
</reference>
<reference key="2">
    <citation type="journal article" date="2013" name="PLoS ONE">
        <title>The mitochondrial genome of soybean reveals complex genome structures and gene evolution at intercellular and phylogenetic levels.</title>
        <authorList>
            <person name="Chang S."/>
            <person name="Wang Y."/>
            <person name="Lu J."/>
            <person name="Gai J."/>
            <person name="Li J."/>
            <person name="Chu P."/>
            <person name="Guan R."/>
            <person name="Zhao T."/>
        </authorList>
    </citation>
    <scope>NUCLEOTIDE SEQUENCE [LARGE SCALE GENOMIC DNA]</scope>
    <source>
        <strain>cv. Aiganhuang</strain>
        <tissue>Etiolated seedling</tissue>
    </source>
</reference>